<keyword id="KW-0149">Chlorophyll biosynthesis</keyword>
<keyword id="KW-0521">NADP</keyword>
<keyword id="KW-0560">Oxidoreductase</keyword>
<keyword id="KW-0627">Porphyrin biosynthesis</keyword>
<accession>Q5N3B4</accession>
<reference key="1">
    <citation type="journal article" date="2007" name="Photosyn. Res.">
        <title>Complete nucleotide sequence of the freshwater unicellular cyanobacterium Synechococcus elongatus PCC 6301 chromosome: gene content and organization.</title>
        <authorList>
            <person name="Sugita C."/>
            <person name="Ogata K."/>
            <person name="Shikata M."/>
            <person name="Jikuya H."/>
            <person name="Takano J."/>
            <person name="Furumichi M."/>
            <person name="Kanehisa M."/>
            <person name="Omata T."/>
            <person name="Sugiura M."/>
            <person name="Sugita M."/>
        </authorList>
    </citation>
    <scope>NUCLEOTIDE SEQUENCE [LARGE SCALE GENOMIC DNA]</scope>
    <source>
        <strain>ATCC 27144 / PCC 6301 / SAUG 1402/1</strain>
    </source>
</reference>
<sequence>MHLAVVGLSHRTAPVAVREKLSIPEQQVEAAIQQLKSYPHIEEVAILSTCNRLEIYCVTRATEPGVREITQFLSEHSHLPLGELRPHLFVLLHQDAVMHLMRVAAGLDSLVLGEGQILSQVKTMYKLGQQYEGVGRILNRLLKQAVTAGKRVRTETSIGTGAVSISSAAVELAQLKVIARDDRSDGNLAGQRVLILGAGKMSRLLVQHLIAKGADTIQILNRTLGRAEELAKQYGGDLQIQVGLLSGLMNAIVEADIVFTSTSATDPILDRAKLEMVLAPEQRLMLIDIAVPRNVAADVVELTSVESYNVDDLREVVAQNQESRRKLAEEAEALLEEEVDAFDNWWQSLDTVPTINCLRDKIEMIREQELEKALSRLGTEFGDKHQAVVEALTRGIVNKILHDPMVQLRSQQDIEARRRAVDALQMLFNLDPQGQLSS</sequence>
<name>HEM1_SYNP6</name>
<dbReference type="EC" id="1.2.1.70" evidence="1"/>
<dbReference type="EMBL" id="AP008231">
    <property type="protein sequence ID" value="BAD79206.1"/>
    <property type="molecule type" value="Genomic_DNA"/>
</dbReference>
<dbReference type="RefSeq" id="WP_011243328.1">
    <property type="nucleotide sequence ID" value="NZ_CP085785.1"/>
</dbReference>
<dbReference type="SMR" id="Q5N3B4"/>
<dbReference type="KEGG" id="syc:syc1016_d"/>
<dbReference type="eggNOG" id="COG0373">
    <property type="taxonomic scope" value="Bacteria"/>
</dbReference>
<dbReference type="UniPathway" id="UPA00251">
    <property type="reaction ID" value="UER00316"/>
</dbReference>
<dbReference type="UniPathway" id="UPA00668"/>
<dbReference type="Proteomes" id="UP000001175">
    <property type="component" value="Chromosome"/>
</dbReference>
<dbReference type="GO" id="GO:0008883">
    <property type="term" value="F:glutamyl-tRNA reductase activity"/>
    <property type="evidence" value="ECO:0007669"/>
    <property type="project" value="UniProtKB-UniRule"/>
</dbReference>
<dbReference type="GO" id="GO:0050661">
    <property type="term" value="F:NADP binding"/>
    <property type="evidence" value="ECO:0007669"/>
    <property type="project" value="InterPro"/>
</dbReference>
<dbReference type="GO" id="GO:0015995">
    <property type="term" value="P:chlorophyll biosynthetic process"/>
    <property type="evidence" value="ECO:0007669"/>
    <property type="project" value="UniProtKB-UniRule"/>
</dbReference>
<dbReference type="GO" id="GO:0006782">
    <property type="term" value="P:protoporphyrinogen IX biosynthetic process"/>
    <property type="evidence" value="ECO:0007669"/>
    <property type="project" value="UniProtKB-UniRule"/>
</dbReference>
<dbReference type="CDD" id="cd05213">
    <property type="entry name" value="NAD_bind_Glutamyl_tRNA_reduct"/>
    <property type="match status" value="1"/>
</dbReference>
<dbReference type="FunFam" id="3.30.460.30:FF:000001">
    <property type="entry name" value="Glutamyl-tRNA reductase"/>
    <property type="match status" value="1"/>
</dbReference>
<dbReference type="FunFam" id="3.40.50.720:FF:000031">
    <property type="entry name" value="Glutamyl-tRNA reductase"/>
    <property type="match status" value="1"/>
</dbReference>
<dbReference type="Gene3D" id="3.30.460.30">
    <property type="entry name" value="Glutamyl-tRNA reductase, N-terminal domain"/>
    <property type="match status" value="1"/>
</dbReference>
<dbReference type="Gene3D" id="3.40.50.720">
    <property type="entry name" value="NAD(P)-binding Rossmann-like Domain"/>
    <property type="match status" value="1"/>
</dbReference>
<dbReference type="HAMAP" id="MF_00087">
    <property type="entry name" value="Glu_tRNA_reductase"/>
    <property type="match status" value="1"/>
</dbReference>
<dbReference type="InterPro" id="IPR000343">
    <property type="entry name" value="4pyrrol_synth_GluRdtase"/>
</dbReference>
<dbReference type="InterPro" id="IPR015896">
    <property type="entry name" value="4pyrrol_synth_GluRdtase_dimer"/>
</dbReference>
<dbReference type="InterPro" id="IPR015895">
    <property type="entry name" value="4pyrrol_synth_GluRdtase_N"/>
</dbReference>
<dbReference type="InterPro" id="IPR018214">
    <property type="entry name" value="GluRdtase_CS"/>
</dbReference>
<dbReference type="InterPro" id="IPR036453">
    <property type="entry name" value="GluRdtase_dimer_dom_sf"/>
</dbReference>
<dbReference type="InterPro" id="IPR036343">
    <property type="entry name" value="GluRdtase_N_sf"/>
</dbReference>
<dbReference type="InterPro" id="IPR036291">
    <property type="entry name" value="NAD(P)-bd_dom_sf"/>
</dbReference>
<dbReference type="InterPro" id="IPR006151">
    <property type="entry name" value="Shikm_DH/Glu-tRNA_Rdtase"/>
</dbReference>
<dbReference type="NCBIfam" id="TIGR01035">
    <property type="entry name" value="hemA"/>
    <property type="match status" value="1"/>
</dbReference>
<dbReference type="NCBIfam" id="NF000744">
    <property type="entry name" value="PRK00045.1-3"/>
    <property type="match status" value="1"/>
</dbReference>
<dbReference type="PANTHER" id="PTHR43120">
    <property type="entry name" value="GLUTAMYL-TRNA REDUCTASE 1, CHLOROPLASTIC"/>
    <property type="match status" value="1"/>
</dbReference>
<dbReference type="PANTHER" id="PTHR43120:SF1">
    <property type="entry name" value="GLUTAMYL-TRNA REDUCTASE 1, CHLOROPLASTIC"/>
    <property type="match status" value="1"/>
</dbReference>
<dbReference type="Pfam" id="PF00745">
    <property type="entry name" value="GlutR_dimer"/>
    <property type="match status" value="1"/>
</dbReference>
<dbReference type="Pfam" id="PF05201">
    <property type="entry name" value="GlutR_N"/>
    <property type="match status" value="1"/>
</dbReference>
<dbReference type="Pfam" id="PF01488">
    <property type="entry name" value="Shikimate_DH"/>
    <property type="match status" value="1"/>
</dbReference>
<dbReference type="PIRSF" id="PIRSF000445">
    <property type="entry name" value="4pyrrol_synth_GluRdtase"/>
    <property type="match status" value="1"/>
</dbReference>
<dbReference type="SUPFAM" id="SSF69742">
    <property type="entry name" value="Glutamyl tRNA-reductase catalytic, N-terminal domain"/>
    <property type="match status" value="1"/>
</dbReference>
<dbReference type="SUPFAM" id="SSF69075">
    <property type="entry name" value="Glutamyl tRNA-reductase dimerization domain"/>
    <property type="match status" value="1"/>
</dbReference>
<dbReference type="SUPFAM" id="SSF51735">
    <property type="entry name" value="NAD(P)-binding Rossmann-fold domains"/>
    <property type="match status" value="1"/>
</dbReference>
<dbReference type="PROSITE" id="PS00747">
    <property type="entry name" value="GLUTR"/>
    <property type="match status" value="1"/>
</dbReference>
<proteinExistence type="inferred from homology"/>
<gene>
    <name evidence="1" type="primary">hemA</name>
    <name type="ordered locus">syc1016_d</name>
</gene>
<organism>
    <name type="scientific">Synechococcus sp. (strain ATCC 27144 / PCC 6301 / SAUG 1402/1)</name>
    <name type="common">Anacystis nidulans</name>
    <dbReference type="NCBI Taxonomy" id="269084"/>
    <lineage>
        <taxon>Bacteria</taxon>
        <taxon>Bacillati</taxon>
        <taxon>Cyanobacteriota</taxon>
        <taxon>Cyanophyceae</taxon>
        <taxon>Synechococcales</taxon>
        <taxon>Synechococcaceae</taxon>
        <taxon>Synechococcus</taxon>
    </lineage>
</organism>
<protein>
    <recommendedName>
        <fullName evidence="1">Glutamyl-tRNA reductase</fullName>
        <shortName evidence="1">GluTR</shortName>
        <ecNumber evidence="1">1.2.1.70</ecNumber>
    </recommendedName>
</protein>
<evidence type="ECO:0000255" key="1">
    <source>
        <dbReference type="HAMAP-Rule" id="MF_00087"/>
    </source>
</evidence>
<feature type="chain" id="PRO_1000004709" description="Glutamyl-tRNA reductase">
    <location>
        <begin position="1"/>
        <end position="438"/>
    </location>
</feature>
<feature type="active site" description="Nucleophile" evidence="1">
    <location>
        <position position="50"/>
    </location>
</feature>
<feature type="binding site" evidence="1">
    <location>
        <begin position="49"/>
        <end position="52"/>
    </location>
    <ligand>
        <name>substrate</name>
    </ligand>
</feature>
<feature type="binding site" evidence="1">
    <location>
        <position position="109"/>
    </location>
    <ligand>
        <name>substrate</name>
    </ligand>
</feature>
<feature type="binding site" evidence="1">
    <location>
        <begin position="114"/>
        <end position="116"/>
    </location>
    <ligand>
        <name>substrate</name>
    </ligand>
</feature>
<feature type="binding site" evidence="1">
    <location>
        <position position="120"/>
    </location>
    <ligand>
        <name>substrate</name>
    </ligand>
</feature>
<feature type="binding site" evidence="1">
    <location>
        <begin position="197"/>
        <end position="202"/>
    </location>
    <ligand>
        <name>NADP(+)</name>
        <dbReference type="ChEBI" id="CHEBI:58349"/>
    </ligand>
</feature>
<feature type="site" description="Important for activity" evidence="1">
    <location>
        <position position="99"/>
    </location>
</feature>
<comment type="function">
    <text evidence="1">Catalyzes the NADPH-dependent reduction of glutamyl-tRNA(Glu) to glutamate 1-semialdehyde (GSA).</text>
</comment>
<comment type="catalytic activity">
    <reaction evidence="1">
        <text>(S)-4-amino-5-oxopentanoate + tRNA(Glu) + NADP(+) = L-glutamyl-tRNA(Glu) + NADPH + H(+)</text>
        <dbReference type="Rhea" id="RHEA:12344"/>
        <dbReference type="Rhea" id="RHEA-COMP:9663"/>
        <dbReference type="Rhea" id="RHEA-COMP:9680"/>
        <dbReference type="ChEBI" id="CHEBI:15378"/>
        <dbReference type="ChEBI" id="CHEBI:57501"/>
        <dbReference type="ChEBI" id="CHEBI:57783"/>
        <dbReference type="ChEBI" id="CHEBI:58349"/>
        <dbReference type="ChEBI" id="CHEBI:78442"/>
        <dbReference type="ChEBI" id="CHEBI:78520"/>
        <dbReference type="EC" id="1.2.1.70"/>
    </reaction>
</comment>
<comment type="pathway">
    <text evidence="1">Porphyrin-containing compound metabolism; protoporphyrin-IX biosynthesis; 5-aminolevulinate from L-glutamyl-tRNA(Glu): step 1/2.</text>
</comment>
<comment type="pathway">
    <text evidence="1">Porphyrin-containing compound metabolism; chlorophyll biosynthesis.</text>
</comment>
<comment type="subunit">
    <text evidence="1">Homodimer.</text>
</comment>
<comment type="domain">
    <text evidence="1">Possesses an unusual extended V-shaped dimeric structure with each monomer consisting of three distinct domains arranged along a curved 'spinal' alpha-helix. The N-terminal catalytic domain specifically recognizes the glutamate moiety of the substrate. The second domain is the NADPH-binding domain, and the third C-terminal domain is responsible for dimerization.</text>
</comment>
<comment type="miscellaneous">
    <text evidence="1">During catalysis, the active site Cys acts as a nucleophile attacking the alpha-carbonyl group of tRNA-bound glutamate with the formation of a thioester intermediate between enzyme and glutamate, and the concomitant release of tRNA(Glu). The thioester intermediate is finally reduced by direct hydride transfer from NADPH, to form the product GSA.</text>
</comment>
<comment type="similarity">
    <text evidence="1">Belongs to the glutamyl-tRNA reductase family.</text>
</comment>